<name>RSMC_SHEB9</name>
<reference key="1">
    <citation type="submission" date="2007-11" db="EMBL/GenBank/DDBJ databases">
        <title>Complete sequence of chromosome of Shewanella baltica OS195.</title>
        <authorList>
            <consortium name="US DOE Joint Genome Institute"/>
            <person name="Copeland A."/>
            <person name="Lucas S."/>
            <person name="Lapidus A."/>
            <person name="Barry K."/>
            <person name="Glavina del Rio T."/>
            <person name="Dalin E."/>
            <person name="Tice H."/>
            <person name="Pitluck S."/>
            <person name="Chain P."/>
            <person name="Malfatti S."/>
            <person name="Shin M."/>
            <person name="Vergez L."/>
            <person name="Schmutz J."/>
            <person name="Larimer F."/>
            <person name="Land M."/>
            <person name="Hauser L."/>
            <person name="Kyrpides N."/>
            <person name="Kim E."/>
            <person name="Brettar I."/>
            <person name="Rodrigues J."/>
            <person name="Konstantinidis K."/>
            <person name="Klappenbach J."/>
            <person name="Hofle M."/>
            <person name="Tiedje J."/>
            <person name="Richardson P."/>
        </authorList>
    </citation>
    <scope>NUCLEOTIDE SEQUENCE [LARGE SCALE GENOMIC DNA]</scope>
    <source>
        <strain>OS195</strain>
    </source>
</reference>
<feature type="chain" id="PRO_0000369769" description="Ribosomal RNA small subunit methyltransferase C">
    <location>
        <begin position="1"/>
        <end position="347"/>
    </location>
</feature>
<proteinExistence type="inferred from homology"/>
<dbReference type="EC" id="2.1.1.172" evidence="1"/>
<dbReference type="EMBL" id="CP000891">
    <property type="protein sequence ID" value="ABX48016.1"/>
    <property type="molecule type" value="Genomic_DNA"/>
</dbReference>
<dbReference type="RefSeq" id="WP_006086025.1">
    <property type="nucleotide sequence ID" value="NC_009997.1"/>
</dbReference>
<dbReference type="SMR" id="A9L1V0"/>
<dbReference type="KEGG" id="sbn:Sbal195_0838"/>
<dbReference type="HOGENOM" id="CLU_049581_0_1_6"/>
<dbReference type="Proteomes" id="UP000000770">
    <property type="component" value="Chromosome"/>
</dbReference>
<dbReference type="GO" id="GO:0005737">
    <property type="term" value="C:cytoplasm"/>
    <property type="evidence" value="ECO:0007669"/>
    <property type="project" value="UniProtKB-SubCell"/>
</dbReference>
<dbReference type="GO" id="GO:0052914">
    <property type="term" value="F:16S rRNA (guanine(1207)-N(2))-methyltransferase activity"/>
    <property type="evidence" value="ECO:0007669"/>
    <property type="project" value="UniProtKB-EC"/>
</dbReference>
<dbReference type="GO" id="GO:0003676">
    <property type="term" value="F:nucleic acid binding"/>
    <property type="evidence" value="ECO:0007669"/>
    <property type="project" value="InterPro"/>
</dbReference>
<dbReference type="CDD" id="cd02440">
    <property type="entry name" value="AdoMet_MTases"/>
    <property type="match status" value="1"/>
</dbReference>
<dbReference type="Gene3D" id="3.40.50.150">
    <property type="entry name" value="Vaccinia Virus protein VP39"/>
    <property type="match status" value="2"/>
</dbReference>
<dbReference type="HAMAP" id="MF_01862">
    <property type="entry name" value="16SrRNA_methyltr_C"/>
    <property type="match status" value="1"/>
</dbReference>
<dbReference type="InterPro" id="IPR002052">
    <property type="entry name" value="DNA_methylase_N6_adenine_CS"/>
</dbReference>
<dbReference type="InterPro" id="IPR013675">
    <property type="entry name" value="Mtase_sm_N"/>
</dbReference>
<dbReference type="InterPro" id="IPR023543">
    <property type="entry name" value="rRNA_ssu_MeTfrase_C"/>
</dbReference>
<dbReference type="InterPro" id="IPR046977">
    <property type="entry name" value="RsmC/RlmG"/>
</dbReference>
<dbReference type="InterPro" id="IPR029063">
    <property type="entry name" value="SAM-dependent_MTases_sf"/>
</dbReference>
<dbReference type="InterPro" id="IPR007848">
    <property type="entry name" value="Small_mtfrase_dom"/>
</dbReference>
<dbReference type="PANTHER" id="PTHR47816">
    <property type="entry name" value="RIBOSOMAL RNA SMALL SUBUNIT METHYLTRANSFERASE C"/>
    <property type="match status" value="1"/>
</dbReference>
<dbReference type="PANTHER" id="PTHR47816:SF4">
    <property type="entry name" value="RIBOSOMAL RNA SMALL SUBUNIT METHYLTRANSFERASE C"/>
    <property type="match status" value="1"/>
</dbReference>
<dbReference type="Pfam" id="PF05175">
    <property type="entry name" value="MTS"/>
    <property type="match status" value="1"/>
</dbReference>
<dbReference type="Pfam" id="PF08468">
    <property type="entry name" value="MTS_N"/>
    <property type="match status" value="1"/>
</dbReference>
<dbReference type="SUPFAM" id="SSF53335">
    <property type="entry name" value="S-adenosyl-L-methionine-dependent methyltransferases"/>
    <property type="match status" value="2"/>
</dbReference>
<accession>A9L1V0</accession>
<protein>
    <recommendedName>
        <fullName evidence="1">Ribosomal RNA small subunit methyltransferase C</fullName>
        <ecNumber evidence="1">2.1.1.172</ecNumber>
    </recommendedName>
    <alternativeName>
        <fullName evidence="1">16S rRNA m2G1207 methyltransferase</fullName>
    </alternativeName>
    <alternativeName>
        <fullName evidence="1">rRNA (guanine-N(2)-)-methyltransferase RsmC</fullName>
    </alternativeName>
</protein>
<evidence type="ECO:0000255" key="1">
    <source>
        <dbReference type="HAMAP-Rule" id="MF_01862"/>
    </source>
</evidence>
<sequence>MLTNPSQVIIRNQDSLSQHKVLVLNHEADLLPKALLDVAASVDALALDYHHYLHLAPHANSKLRCYFGHDLPHQDPLEREKYDTVIVYFPKAKPLAPYLFNLAANHLVPNGQLLVVGENKGGIKSLVKLLPEYFATGMKLDNARHCLLFGSSLEGSAPAMKLSDWVSQYQLSTPQGEISICNLVGVFSEKRLDLGTELLLSHLPTLSGRVLDFGCGAGVIAAALLKAQPSLSLECVDINAMALASCELTLAANGMTAKVYPSDGLAQTTGKFNGIISNPPFHDGLASTTSIAQNFVTDSAKQLQHNGIWQIVANRHLPYSDIIAAEFGQLKVVADNNKYKLYYFQHK</sequence>
<organism>
    <name type="scientific">Shewanella baltica (strain OS195)</name>
    <dbReference type="NCBI Taxonomy" id="399599"/>
    <lineage>
        <taxon>Bacteria</taxon>
        <taxon>Pseudomonadati</taxon>
        <taxon>Pseudomonadota</taxon>
        <taxon>Gammaproteobacteria</taxon>
        <taxon>Alteromonadales</taxon>
        <taxon>Shewanellaceae</taxon>
        <taxon>Shewanella</taxon>
    </lineage>
</organism>
<gene>
    <name evidence="1" type="primary">rsmC</name>
    <name type="ordered locus">Sbal195_0838</name>
</gene>
<comment type="function">
    <text evidence="1">Specifically methylates the guanine in position 1207 of 16S rRNA in the 30S particle.</text>
</comment>
<comment type="catalytic activity">
    <reaction evidence="1">
        <text>guanosine(1207) in 16S rRNA + S-adenosyl-L-methionine = N(2)-methylguanosine(1207) in 16S rRNA + S-adenosyl-L-homocysteine + H(+)</text>
        <dbReference type="Rhea" id="RHEA:42736"/>
        <dbReference type="Rhea" id="RHEA-COMP:10213"/>
        <dbReference type="Rhea" id="RHEA-COMP:10214"/>
        <dbReference type="ChEBI" id="CHEBI:15378"/>
        <dbReference type="ChEBI" id="CHEBI:57856"/>
        <dbReference type="ChEBI" id="CHEBI:59789"/>
        <dbReference type="ChEBI" id="CHEBI:74269"/>
        <dbReference type="ChEBI" id="CHEBI:74481"/>
        <dbReference type="EC" id="2.1.1.172"/>
    </reaction>
</comment>
<comment type="subunit">
    <text evidence="1">Monomer.</text>
</comment>
<comment type="subcellular location">
    <subcellularLocation>
        <location evidence="1">Cytoplasm</location>
    </subcellularLocation>
</comment>
<comment type="similarity">
    <text evidence="1">Belongs to the methyltransferase superfamily. RsmC family.</text>
</comment>
<keyword id="KW-0963">Cytoplasm</keyword>
<keyword id="KW-0489">Methyltransferase</keyword>
<keyword id="KW-0698">rRNA processing</keyword>
<keyword id="KW-0949">S-adenosyl-L-methionine</keyword>
<keyword id="KW-0808">Transferase</keyword>